<dbReference type="EC" id="2.7.7.6" evidence="1"/>
<dbReference type="EMBL" id="AM946015">
    <property type="protein sequence ID" value="CAR43008.1"/>
    <property type="molecule type" value="Genomic_DNA"/>
</dbReference>
<dbReference type="RefSeq" id="WP_015911710.1">
    <property type="nucleotide sequence ID" value="NC_012004.1"/>
</dbReference>
<dbReference type="SMR" id="B9DV47"/>
<dbReference type="STRING" id="218495.SUB1390"/>
<dbReference type="GeneID" id="93826712"/>
<dbReference type="KEGG" id="sub:SUB1390"/>
<dbReference type="eggNOG" id="COG1758">
    <property type="taxonomic scope" value="Bacteria"/>
</dbReference>
<dbReference type="HOGENOM" id="CLU_125406_0_0_9"/>
<dbReference type="OrthoDB" id="9815459at2"/>
<dbReference type="Proteomes" id="UP000000449">
    <property type="component" value="Chromosome"/>
</dbReference>
<dbReference type="GO" id="GO:0000428">
    <property type="term" value="C:DNA-directed RNA polymerase complex"/>
    <property type="evidence" value="ECO:0007669"/>
    <property type="project" value="UniProtKB-KW"/>
</dbReference>
<dbReference type="GO" id="GO:0003677">
    <property type="term" value="F:DNA binding"/>
    <property type="evidence" value="ECO:0007669"/>
    <property type="project" value="UniProtKB-UniRule"/>
</dbReference>
<dbReference type="GO" id="GO:0003899">
    <property type="term" value="F:DNA-directed RNA polymerase activity"/>
    <property type="evidence" value="ECO:0007669"/>
    <property type="project" value="UniProtKB-UniRule"/>
</dbReference>
<dbReference type="GO" id="GO:0006351">
    <property type="term" value="P:DNA-templated transcription"/>
    <property type="evidence" value="ECO:0007669"/>
    <property type="project" value="UniProtKB-UniRule"/>
</dbReference>
<dbReference type="Gene3D" id="3.90.940.10">
    <property type="match status" value="1"/>
</dbReference>
<dbReference type="HAMAP" id="MF_00366">
    <property type="entry name" value="RNApol_bact_RpoZ"/>
    <property type="match status" value="1"/>
</dbReference>
<dbReference type="InterPro" id="IPR003716">
    <property type="entry name" value="DNA-dir_RNA_pol_omega"/>
</dbReference>
<dbReference type="InterPro" id="IPR006110">
    <property type="entry name" value="Pol_omega/Rpo6/RPB6"/>
</dbReference>
<dbReference type="InterPro" id="IPR036161">
    <property type="entry name" value="RPB6/omega-like_sf"/>
</dbReference>
<dbReference type="NCBIfam" id="TIGR00690">
    <property type="entry name" value="rpoZ"/>
    <property type="match status" value="1"/>
</dbReference>
<dbReference type="PANTHER" id="PTHR34476">
    <property type="entry name" value="DNA-DIRECTED RNA POLYMERASE SUBUNIT OMEGA"/>
    <property type="match status" value="1"/>
</dbReference>
<dbReference type="PANTHER" id="PTHR34476:SF1">
    <property type="entry name" value="DNA-DIRECTED RNA POLYMERASE SUBUNIT OMEGA"/>
    <property type="match status" value="1"/>
</dbReference>
<dbReference type="Pfam" id="PF01192">
    <property type="entry name" value="RNA_pol_Rpb6"/>
    <property type="match status" value="1"/>
</dbReference>
<dbReference type="SMART" id="SM01409">
    <property type="entry name" value="RNA_pol_Rpb6"/>
    <property type="match status" value="1"/>
</dbReference>
<dbReference type="SUPFAM" id="SSF63562">
    <property type="entry name" value="RPB6/omega subunit-like"/>
    <property type="match status" value="1"/>
</dbReference>
<keyword id="KW-0240">DNA-directed RNA polymerase</keyword>
<keyword id="KW-0548">Nucleotidyltransferase</keyword>
<keyword id="KW-1185">Reference proteome</keyword>
<keyword id="KW-0804">Transcription</keyword>
<keyword id="KW-0808">Transferase</keyword>
<reference key="1">
    <citation type="journal article" date="2009" name="BMC Genomics">
        <title>Evidence for niche adaptation in the genome of the bovine pathogen Streptococcus uberis.</title>
        <authorList>
            <person name="Ward P.N."/>
            <person name="Holden M.T.G."/>
            <person name="Leigh J.A."/>
            <person name="Lennard N."/>
            <person name="Bignell A."/>
            <person name="Barron A."/>
            <person name="Clark L."/>
            <person name="Quail M.A."/>
            <person name="Woodward J."/>
            <person name="Barrell B.G."/>
            <person name="Egan S.A."/>
            <person name="Field T.R."/>
            <person name="Maskell D."/>
            <person name="Kehoe M."/>
            <person name="Dowson C.G."/>
            <person name="Chanter N."/>
            <person name="Whatmore A.M."/>
            <person name="Bentley S.D."/>
            <person name="Parkhill J."/>
        </authorList>
    </citation>
    <scope>NUCLEOTIDE SEQUENCE [LARGE SCALE GENOMIC DNA]</scope>
    <source>
        <strain>ATCC BAA-854 / 0140J</strain>
    </source>
</reference>
<evidence type="ECO:0000255" key="1">
    <source>
        <dbReference type="HAMAP-Rule" id="MF_00366"/>
    </source>
</evidence>
<feature type="chain" id="PRO_1000194815" description="DNA-directed RNA polymerase subunit omega">
    <location>
        <begin position="1"/>
        <end position="105"/>
    </location>
</feature>
<accession>B9DV47</accession>
<sequence length="105" mass="11752">MMLKPSIDTLLDKVPSKYSLVILQAKRAHELEAGAKATQSFKSVKSTLRALEEIESGNVVIHPDPSAKRAAVRAKIEADRLAKEEEERKIKEQIAKEKEEEGEKI</sequence>
<comment type="function">
    <text evidence="1">Promotes RNA polymerase assembly. Latches the N- and C-terminal regions of the beta' subunit thereby facilitating its interaction with the beta and alpha subunits.</text>
</comment>
<comment type="catalytic activity">
    <reaction evidence="1">
        <text>RNA(n) + a ribonucleoside 5'-triphosphate = RNA(n+1) + diphosphate</text>
        <dbReference type="Rhea" id="RHEA:21248"/>
        <dbReference type="Rhea" id="RHEA-COMP:14527"/>
        <dbReference type="Rhea" id="RHEA-COMP:17342"/>
        <dbReference type="ChEBI" id="CHEBI:33019"/>
        <dbReference type="ChEBI" id="CHEBI:61557"/>
        <dbReference type="ChEBI" id="CHEBI:140395"/>
        <dbReference type="EC" id="2.7.7.6"/>
    </reaction>
</comment>
<comment type="subunit">
    <text evidence="1">The RNAP catalytic core consists of 2 alpha, 1 beta, 1 beta' and 1 omega subunit. When a sigma factor is associated with the core the holoenzyme is formed, which can initiate transcription.</text>
</comment>
<comment type="similarity">
    <text evidence="1">Belongs to the RNA polymerase subunit omega family.</text>
</comment>
<protein>
    <recommendedName>
        <fullName evidence="1">DNA-directed RNA polymerase subunit omega</fullName>
        <shortName evidence="1">RNAP omega subunit</shortName>
        <ecNumber evidence="1">2.7.7.6</ecNumber>
    </recommendedName>
    <alternativeName>
        <fullName evidence="1">RNA polymerase omega subunit</fullName>
    </alternativeName>
    <alternativeName>
        <fullName evidence="1">Transcriptase subunit omega</fullName>
    </alternativeName>
</protein>
<organism>
    <name type="scientific">Streptococcus uberis (strain ATCC BAA-854 / 0140J)</name>
    <dbReference type="NCBI Taxonomy" id="218495"/>
    <lineage>
        <taxon>Bacteria</taxon>
        <taxon>Bacillati</taxon>
        <taxon>Bacillota</taxon>
        <taxon>Bacilli</taxon>
        <taxon>Lactobacillales</taxon>
        <taxon>Streptococcaceae</taxon>
        <taxon>Streptococcus</taxon>
    </lineage>
</organism>
<name>RPOZ_STRU0</name>
<proteinExistence type="inferred from homology"/>
<gene>
    <name evidence="1" type="primary">rpoZ</name>
    <name type="ordered locus">SUB1390</name>
</gene>